<evidence type="ECO:0000255" key="1">
    <source>
        <dbReference type="HAMAP-Rule" id="MF_01572"/>
    </source>
</evidence>
<reference key="1">
    <citation type="journal article" date="2009" name="BMC Genomics">
        <title>Genome evolution driven by host adaptations results in a more virulent and antimicrobial-resistant Streptococcus pneumoniae serotype 14.</title>
        <authorList>
            <person name="Ding F."/>
            <person name="Tang P."/>
            <person name="Hsu M.-H."/>
            <person name="Cui P."/>
            <person name="Hu S."/>
            <person name="Yu J."/>
            <person name="Chiu C.-H."/>
        </authorList>
    </citation>
    <scope>NUCLEOTIDE SEQUENCE [LARGE SCALE GENOMIC DNA]</scope>
    <source>
        <strain>CGSP14</strain>
    </source>
</reference>
<proteinExistence type="inferred from homology"/>
<feature type="chain" id="PRO_1000200762" description="UPF0397 protein SPCG_0463">
    <location>
        <begin position="1"/>
        <end position="182"/>
    </location>
</feature>
<feature type="transmembrane region" description="Helical" evidence="1">
    <location>
        <begin position="10"/>
        <end position="30"/>
    </location>
</feature>
<feature type="transmembrane region" description="Helical" evidence="1">
    <location>
        <begin position="46"/>
        <end position="66"/>
    </location>
</feature>
<feature type="transmembrane region" description="Helical" evidence="1">
    <location>
        <begin position="73"/>
        <end position="93"/>
    </location>
</feature>
<feature type="transmembrane region" description="Helical" evidence="1">
    <location>
        <begin position="109"/>
        <end position="129"/>
    </location>
</feature>
<feature type="transmembrane region" description="Helical" evidence="1">
    <location>
        <begin position="148"/>
        <end position="168"/>
    </location>
</feature>
<dbReference type="EMBL" id="CP001033">
    <property type="protein sequence ID" value="ACB89715.1"/>
    <property type="molecule type" value="Genomic_DNA"/>
</dbReference>
<dbReference type="RefSeq" id="WP_000403162.1">
    <property type="nucleotide sequence ID" value="NC_010582.1"/>
</dbReference>
<dbReference type="SMR" id="B2IM88"/>
<dbReference type="KEGG" id="spw:SPCG_0463"/>
<dbReference type="HOGENOM" id="CLU_120023_0_0_9"/>
<dbReference type="GO" id="GO:0005886">
    <property type="term" value="C:plasma membrane"/>
    <property type="evidence" value="ECO:0007669"/>
    <property type="project" value="UniProtKB-SubCell"/>
</dbReference>
<dbReference type="Gene3D" id="1.10.1760.20">
    <property type="match status" value="1"/>
</dbReference>
<dbReference type="HAMAP" id="MF_01572">
    <property type="entry name" value="UPF0397"/>
    <property type="match status" value="1"/>
</dbReference>
<dbReference type="InterPro" id="IPR009825">
    <property type="entry name" value="ECF_substrate-spec-like"/>
</dbReference>
<dbReference type="InterPro" id="IPR022914">
    <property type="entry name" value="UPF0397"/>
</dbReference>
<dbReference type="NCBIfam" id="NF010182">
    <property type="entry name" value="PRK13661.1"/>
    <property type="match status" value="1"/>
</dbReference>
<dbReference type="PANTHER" id="PTHR37815">
    <property type="entry name" value="UPF0397 PROTEIN BC_2624-RELATED"/>
    <property type="match status" value="1"/>
</dbReference>
<dbReference type="PANTHER" id="PTHR37815:SF3">
    <property type="entry name" value="UPF0397 PROTEIN SPR0429"/>
    <property type="match status" value="1"/>
</dbReference>
<dbReference type="Pfam" id="PF07155">
    <property type="entry name" value="ECF-ribofla_trS"/>
    <property type="match status" value="1"/>
</dbReference>
<comment type="subcellular location">
    <subcellularLocation>
        <location evidence="1">Cell membrane</location>
        <topology evidence="1">Multi-pass membrane protein</topology>
    </subcellularLocation>
</comment>
<comment type="similarity">
    <text evidence="1">Belongs to the UPF0397 family.</text>
</comment>
<name>Y463_STRPS</name>
<keyword id="KW-1003">Cell membrane</keyword>
<keyword id="KW-0472">Membrane</keyword>
<keyword id="KW-0812">Transmembrane</keyword>
<keyword id="KW-1133">Transmembrane helix</keyword>
<sequence>MEIKFTIKQVVAVGIGAALFVVIGMINIPTPVPNTSIQLQYAVQALLSIIFGPIIGLLVGLIGHAIKDSLAGYGLWWTWIIASGLFGLVVGLFRKYVRVINGVFDWKDILIFNLIQLLANALVWGVLAPLGDVVIYQEAAEKVFAQGIVAGIANGVSVAIAGTLLLLAYAGTQTRAGSLKKD</sequence>
<organism>
    <name type="scientific">Streptococcus pneumoniae (strain CGSP14)</name>
    <dbReference type="NCBI Taxonomy" id="516950"/>
    <lineage>
        <taxon>Bacteria</taxon>
        <taxon>Bacillati</taxon>
        <taxon>Bacillota</taxon>
        <taxon>Bacilli</taxon>
        <taxon>Lactobacillales</taxon>
        <taxon>Streptococcaceae</taxon>
        <taxon>Streptococcus</taxon>
    </lineage>
</organism>
<accession>B2IM88</accession>
<gene>
    <name type="ordered locus">SPCG_0463</name>
</gene>
<protein>
    <recommendedName>
        <fullName evidence="1">UPF0397 protein SPCG_0463</fullName>
    </recommendedName>
</protein>